<comment type="function">
    <text evidence="2 9 10">Guanine nucleotide exchange factor that catalyzes guanine nucleotide exchange on RHOA and CDC42, and thereby contributes to the regulation of RHOA and CDC42 signaling pathways (PubMed:11889037, PubMed:12006984, PubMed:17000758). Seems to lack activity with RAC1. Becomes activated and highly tumorigenic by truncation of the N-terminus (By similarity).</text>
</comment>
<comment type="subunit">
    <text evidence="2 11">Interacts with GTP-bound RAC1 (By similarity). Interacts with CDC42 (PubMed:11889037). Interacts with RHOA (PubMed:12006984). Interacts with CCPG1, which results in specific inhibition of its exchange activity toward RHOA, but does not affect its activity on CDC42 (PubMed:17000758).</text>
</comment>
<comment type="interaction">
    <interactant intactId="EBI-602123">
        <id>Q64096</id>
    </interactant>
    <interactant intactId="EBI-287394">
        <id>P60953-2</id>
        <label>CDC42</label>
    </interactant>
    <organismsDiffer>true</organismsDiffer>
    <experiments>4</experiments>
</comment>
<comment type="subcellular location">
    <subcellularLocation>
        <location evidence="11">Cytoplasm</location>
    </subcellularLocation>
    <subcellularLocation>
        <location evidence="11">Cell membrane</location>
        <topology evidence="11">Peripheral membrane protein</topology>
        <orientation evidence="11">Cytoplasmic side</orientation>
    </subcellularLocation>
</comment>
<comment type="tissue specificity">
    <text evidence="12">Expressed at low levels in several hemopoietic cell lines and in thymus and spleen, and at higher levels in other tissues, particularly in brain.</text>
</comment>
<comment type="domain">
    <text evidence="11">The DH domain is involved in interaction with CCPG1.</text>
</comment>
<comment type="domain">
    <text evidence="1">The CRAL-TRIO domain mediates interaction with various inositol phospholipids, such as phosphatidylinositol 3-phosphate (PI3P), phosphatidylinositol 4-phosphate (PI4P) and phosphatidylinositol 5-phosphate (PI5P).</text>
</comment>
<comment type="similarity">
    <text evidence="13">Belongs to the MCF2 family.</text>
</comment>
<proteinExistence type="evidence at protein level"/>
<organism>
    <name type="scientific">Mus musculus</name>
    <name type="common">Mouse</name>
    <dbReference type="NCBI Taxonomy" id="10090"/>
    <lineage>
        <taxon>Eukaryota</taxon>
        <taxon>Metazoa</taxon>
        <taxon>Chordata</taxon>
        <taxon>Craniata</taxon>
        <taxon>Vertebrata</taxon>
        <taxon>Euteleostomi</taxon>
        <taxon>Mammalia</taxon>
        <taxon>Eutheria</taxon>
        <taxon>Euarchontoglires</taxon>
        <taxon>Glires</taxon>
        <taxon>Rodentia</taxon>
        <taxon>Myomorpha</taxon>
        <taxon>Muroidea</taxon>
        <taxon>Muridae</taxon>
        <taxon>Murinae</taxon>
        <taxon>Mus</taxon>
        <taxon>Mus</taxon>
    </lineage>
</organism>
<dbReference type="EMBL" id="S76838">
    <property type="protein sequence ID" value="AAB33461.2"/>
    <property type="molecule type" value="mRNA"/>
</dbReference>
<dbReference type="EMBL" id="AC127308">
    <property type="status" value="NOT_ANNOTATED_CDS"/>
    <property type="molecule type" value="Genomic_DNA"/>
</dbReference>
<dbReference type="EMBL" id="AC134581">
    <property type="status" value="NOT_ANNOTATED_CDS"/>
    <property type="molecule type" value="Genomic_DNA"/>
</dbReference>
<dbReference type="CCDS" id="CCDS90372.1"/>
<dbReference type="PDB" id="1KZ7">
    <property type="method" value="X-ray"/>
    <property type="resolution" value="2.40 A"/>
    <property type="chains" value="A/C=623-967"/>
</dbReference>
<dbReference type="PDB" id="1KZG">
    <property type="method" value="X-ray"/>
    <property type="resolution" value="2.60 A"/>
    <property type="chains" value="A/C=623-967"/>
</dbReference>
<dbReference type="PDB" id="1LB1">
    <property type="method" value="X-ray"/>
    <property type="resolution" value="2.81 A"/>
    <property type="chains" value="A/C/E/G=623-967"/>
</dbReference>
<dbReference type="PDB" id="1RJ2">
    <property type="method" value="X-ray"/>
    <property type="resolution" value="3.00 A"/>
    <property type="chains" value="A/D/G/J=623-968"/>
</dbReference>
<dbReference type="PDBsum" id="1KZ7"/>
<dbReference type="PDBsum" id="1KZG"/>
<dbReference type="PDBsum" id="1LB1"/>
<dbReference type="PDBsum" id="1RJ2"/>
<dbReference type="SMR" id="Q64096"/>
<dbReference type="DIP" id="DIP-34544N"/>
<dbReference type="FunCoup" id="Q64096">
    <property type="interactions" value="553"/>
</dbReference>
<dbReference type="IntAct" id="Q64096">
    <property type="interactions" value="4"/>
</dbReference>
<dbReference type="MINT" id="Q64096"/>
<dbReference type="STRING" id="10090.ENSMUSP00000106500"/>
<dbReference type="GlyGen" id="Q64096">
    <property type="glycosylation" value="1 site"/>
</dbReference>
<dbReference type="iPTMnet" id="Q64096"/>
<dbReference type="PhosphoSitePlus" id="Q64096"/>
<dbReference type="PaxDb" id="10090-ENSMUSP00000106500"/>
<dbReference type="ProteomicsDB" id="295979"/>
<dbReference type="Pumba" id="Q64096"/>
<dbReference type="AGR" id="MGI:103263"/>
<dbReference type="MGI" id="MGI:103263">
    <property type="gene designation" value="Mcf2l"/>
</dbReference>
<dbReference type="eggNOG" id="KOG4240">
    <property type="taxonomic scope" value="Eukaryota"/>
</dbReference>
<dbReference type="InParanoid" id="Q64096"/>
<dbReference type="Reactome" id="R-MMU-193648">
    <property type="pathway name" value="NRAGE signals death through JNK"/>
</dbReference>
<dbReference type="Reactome" id="R-MMU-416482">
    <property type="pathway name" value="G alpha (12/13) signalling events"/>
</dbReference>
<dbReference type="Reactome" id="R-MMU-8980692">
    <property type="pathway name" value="RHOA GTPase cycle"/>
</dbReference>
<dbReference type="Reactome" id="R-MMU-9013026">
    <property type="pathway name" value="RHOB GTPase cycle"/>
</dbReference>
<dbReference type="Reactome" id="R-MMU-9013106">
    <property type="pathway name" value="RHOC GTPase cycle"/>
</dbReference>
<dbReference type="Reactome" id="R-MMU-9013148">
    <property type="pathway name" value="CDC42 GTPase cycle"/>
</dbReference>
<dbReference type="Reactome" id="R-MMU-9013149">
    <property type="pathway name" value="RAC1 GTPase cycle"/>
</dbReference>
<dbReference type="Reactome" id="R-MMU-9013408">
    <property type="pathway name" value="RHOG GTPase cycle"/>
</dbReference>
<dbReference type="ChiTaRS" id="Mcf2l">
    <property type="organism name" value="mouse"/>
</dbReference>
<dbReference type="EvolutionaryTrace" id="Q64096"/>
<dbReference type="PRO" id="PR:Q64096"/>
<dbReference type="Proteomes" id="UP000000589">
    <property type="component" value="Unplaced"/>
</dbReference>
<dbReference type="RNAct" id="Q64096">
    <property type="molecule type" value="protein"/>
</dbReference>
<dbReference type="GO" id="GO:0005737">
    <property type="term" value="C:cytoplasm"/>
    <property type="evidence" value="ECO:0000250"/>
    <property type="project" value="UniProtKB"/>
</dbReference>
<dbReference type="GO" id="GO:0030027">
    <property type="term" value="C:lamellipodium"/>
    <property type="evidence" value="ECO:0000314"/>
    <property type="project" value="MGI"/>
</dbReference>
<dbReference type="GO" id="GO:0016020">
    <property type="term" value="C:membrane"/>
    <property type="evidence" value="ECO:0000314"/>
    <property type="project" value="MGI"/>
</dbReference>
<dbReference type="GO" id="GO:0005886">
    <property type="term" value="C:plasma membrane"/>
    <property type="evidence" value="ECO:0007669"/>
    <property type="project" value="UniProtKB-SubCell"/>
</dbReference>
<dbReference type="GO" id="GO:0005545">
    <property type="term" value="F:1-phosphatidylinositol binding"/>
    <property type="evidence" value="ECO:0000314"/>
    <property type="project" value="MGI"/>
</dbReference>
<dbReference type="GO" id="GO:0005085">
    <property type="term" value="F:guanyl-nucleotide exchange factor activity"/>
    <property type="evidence" value="ECO:0000314"/>
    <property type="project" value="MGI"/>
</dbReference>
<dbReference type="GO" id="GO:0035556">
    <property type="term" value="P:intracellular signal transduction"/>
    <property type="evidence" value="ECO:0000250"/>
    <property type="project" value="UniProtKB"/>
</dbReference>
<dbReference type="GO" id="GO:0045944">
    <property type="term" value="P:positive regulation of transcription by RNA polymerase II"/>
    <property type="evidence" value="ECO:0000316"/>
    <property type="project" value="MGI"/>
</dbReference>
<dbReference type="GO" id="GO:0007266">
    <property type="term" value="P:Rho protein signal transduction"/>
    <property type="evidence" value="ECO:0000314"/>
    <property type="project" value="MGI"/>
</dbReference>
<dbReference type="CDD" id="cd01227">
    <property type="entry name" value="PH_Dbs"/>
    <property type="match status" value="1"/>
</dbReference>
<dbReference type="CDD" id="cd00160">
    <property type="entry name" value="RhoGEF"/>
    <property type="match status" value="1"/>
</dbReference>
<dbReference type="CDD" id="cd00170">
    <property type="entry name" value="SEC14"/>
    <property type="match status" value="1"/>
</dbReference>
<dbReference type="CDD" id="cd11857">
    <property type="entry name" value="SH3_DBS"/>
    <property type="match status" value="1"/>
</dbReference>
<dbReference type="CDD" id="cd00176">
    <property type="entry name" value="SPEC"/>
    <property type="match status" value="1"/>
</dbReference>
<dbReference type="FunFam" id="2.30.29.30:FF:000078">
    <property type="entry name" value="Guanine nucleotide exchange factor DBS"/>
    <property type="match status" value="1"/>
</dbReference>
<dbReference type="FunFam" id="2.30.30.40:FF:000198">
    <property type="entry name" value="Guanine nucleotide exchange factor DBS"/>
    <property type="match status" value="1"/>
</dbReference>
<dbReference type="FunFam" id="1.20.58.60:FF:000136">
    <property type="entry name" value="MCF.2 cell line derived transforming sequence like"/>
    <property type="match status" value="1"/>
</dbReference>
<dbReference type="Gene3D" id="1.20.58.60">
    <property type="match status" value="1"/>
</dbReference>
<dbReference type="Gene3D" id="1.20.900.10">
    <property type="entry name" value="Dbl homology (DH) domain"/>
    <property type="match status" value="1"/>
</dbReference>
<dbReference type="Gene3D" id="2.30.29.30">
    <property type="entry name" value="Pleckstrin-homology domain (PH domain)/Phosphotyrosine-binding domain (PTB)"/>
    <property type="match status" value="1"/>
</dbReference>
<dbReference type="Gene3D" id="2.30.30.40">
    <property type="entry name" value="SH3 Domains"/>
    <property type="match status" value="1"/>
</dbReference>
<dbReference type="InterPro" id="IPR001251">
    <property type="entry name" value="CRAL-TRIO_dom"/>
</dbReference>
<dbReference type="InterPro" id="IPR036865">
    <property type="entry name" value="CRAL-TRIO_dom_sf"/>
</dbReference>
<dbReference type="InterPro" id="IPR035899">
    <property type="entry name" value="DBL_dom_sf"/>
</dbReference>
<dbReference type="InterPro" id="IPR035534">
    <property type="entry name" value="DBS_PH"/>
</dbReference>
<dbReference type="InterPro" id="IPR035532">
    <property type="entry name" value="DBS_SH3"/>
</dbReference>
<dbReference type="InterPro" id="IPR000219">
    <property type="entry name" value="DH_dom"/>
</dbReference>
<dbReference type="InterPro" id="IPR001331">
    <property type="entry name" value="GDS_CDC24_CS"/>
</dbReference>
<dbReference type="InterPro" id="IPR011993">
    <property type="entry name" value="PH-like_dom_sf"/>
</dbReference>
<dbReference type="InterPro" id="IPR001849">
    <property type="entry name" value="PH_domain"/>
</dbReference>
<dbReference type="InterPro" id="IPR051336">
    <property type="entry name" value="RhoGEF_Guanine_NuclExch_SF"/>
</dbReference>
<dbReference type="InterPro" id="IPR036028">
    <property type="entry name" value="SH3-like_dom_sf"/>
</dbReference>
<dbReference type="InterPro" id="IPR001452">
    <property type="entry name" value="SH3_domain"/>
</dbReference>
<dbReference type="InterPro" id="IPR055251">
    <property type="entry name" value="SOS1_NGEF_PH"/>
</dbReference>
<dbReference type="InterPro" id="IPR018159">
    <property type="entry name" value="Spectrin/alpha-actinin"/>
</dbReference>
<dbReference type="InterPro" id="IPR056466">
    <property type="entry name" value="Spectrin_DBS"/>
</dbReference>
<dbReference type="InterPro" id="IPR002017">
    <property type="entry name" value="Spectrin_repeat"/>
</dbReference>
<dbReference type="PANTHER" id="PTHR22826:SF115">
    <property type="entry name" value="GUANINE NUCLEOTIDE EXCHANGE FACTOR DBS"/>
    <property type="match status" value="1"/>
</dbReference>
<dbReference type="PANTHER" id="PTHR22826">
    <property type="entry name" value="RHO GUANINE EXCHANGE FACTOR-RELATED"/>
    <property type="match status" value="1"/>
</dbReference>
<dbReference type="Pfam" id="PF13716">
    <property type="entry name" value="CRAL_TRIO_2"/>
    <property type="match status" value="1"/>
</dbReference>
<dbReference type="Pfam" id="PF00621">
    <property type="entry name" value="RhoGEF"/>
    <property type="match status" value="1"/>
</dbReference>
<dbReference type="Pfam" id="PF22697">
    <property type="entry name" value="SOS1_NGEF_PH"/>
    <property type="match status" value="1"/>
</dbReference>
<dbReference type="Pfam" id="PF00435">
    <property type="entry name" value="Spectrin"/>
    <property type="match status" value="1"/>
</dbReference>
<dbReference type="Pfam" id="PF23289">
    <property type="entry name" value="Spectrin_5"/>
    <property type="match status" value="1"/>
</dbReference>
<dbReference type="SMART" id="SM00233">
    <property type="entry name" value="PH"/>
    <property type="match status" value="1"/>
</dbReference>
<dbReference type="SMART" id="SM00325">
    <property type="entry name" value="RhoGEF"/>
    <property type="match status" value="1"/>
</dbReference>
<dbReference type="SMART" id="SM00516">
    <property type="entry name" value="SEC14"/>
    <property type="match status" value="1"/>
</dbReference>
<dbReference type="SMART" id="SM00326">
    <property type="entry name" value="SH3"/>
    <property type="match status" value="1"/>
</dbReference>
<dbReference type="SMART" id="SM00150">
    <property type="entry name" value="SPEC"/>
    <property type="match status" value="1"/>
</dbReference>
<dbReference type="SUPFAM" id="SSF52087">
    <property type="entry name" value="CRAL/TRIO domain"/>
    <property type="match status" value="1"/>
</dbReference>
<dbReference type="SUPFAM" id="SSF48065">
    <property type="entry name" value="DBL homology domain (DH-domain)"/>
    <property type="match status" value="1"/>
</dbReference>
<dbReference type="SUPFAM" id="SSF50729">
    <property type="entry name" value="PH domain-like"/>
    <property type="match status" value="1"/>
</dbReference>
<dbReference type="SUPFAM" id="SSF50044">
    <property type="entry name" value="SH3-domain"/>
    <property type="match status" value="1"/>
</dbReference>
<dbReference type="SUPFAM" id="SSF46966">
    <property type="entry name" value="Spectrin repeat"/>
    <property type="match status" value="1"/>
</dbReference>
<dbReference type="PROSITE" id="PS50191">
    <property type="entry name" value="CRAL_TRIO"/>
    <property type="match status" value="1"/>
</dbReference>
<dbReference type="PROSITE" id="PS00741">
    <property type="entry name" value="DH_1"/>
    <property type="match status" value="1"/>
</dbReference>
<dbReference type="PROSITE" id="PS50010">
    <property type="entry name" value="DH_2"/>
    <property type="match status" value="1"/>
</dbReference>
<dbReference type="PROSITE" id="PS50003">
    <property type="entry name" value="PH_DOMAIN"/>
    <property type="match status" value="1"/>
</dbReference>
<dbReference type="PROSITE" id="PS50002">
    <property type="entry name" value="SH3"/>
    <property type="match status" value="1"/>
</dbReference>
<feature type="chain" id="PRO_0000080936" description="Guanine nucleotide exchange factor DBS">
    <location>
        <begin position="1"/>
        <end position="1149"/>
    </location>
</feature>
<feature type="domain" description="CRAL-TRIO" evidence="4">
    <location>
        <begin position="52"/>
        <end position="224"/>
    </location>
</feature>
<feature type="repeat" description="Spectrin">
    <location>
        <begin position="351"/>
        <end position="456"/>
    </location>
</feature>
<feature type="domain" description="DH" evidence="5">
    <location>
        <begin position="632"/>
        <end position="812"/>
    </location>
</feature>
<feature type="domain" description="PH" evidence="6">
    <location>
        <begin position="841"/>
        <end position="950"/>
    </location>
</feature>
<feature type="domain" description="SH3" evidence="7">
    <location>
        <begin position="1055"/>
        <end position="1116"/>
    </location>
</feature>
<feature type="region of interest" description="Disordered" evidence="8">
    <location>
        <begin position="555"/>
        <end position="627"/>
    </location>
</feature>
<feature type="region of interest" description="Disordered" evidence="8">
    <location>
        <begin position="956"/>
        <end position="1033"/>
    </location>
</feature>
<feature type="coiled-coil region" evidence="3">
    <location>
        <begin position="503"/>
        <end position="529"/>
    </location>
</feature>
<feature type="compositionally biased region" description="Low complexity" evidence="8">
    <location>
        <begin position="583"/>
        <end position="594"/>
    </location>
</feature>
<feature type="compositionally biased region" description="Basic and acidic residues" evidence="8">
    <location>
        <begin position="607"/>
        <end position="616"/>
    </location>
</feature>
<feature type="compositionally biased region" description="Low complexity" evidence="8">
    <location>
        <begin position="966"/>
        <end position="978"/>
    </location>
</feature>
<feature type="modified residue" description="Phosphoserine" evidence="2">
    <location>
        <position position="457"/>
    </location>
</feature>
<feature type="modified residue" description="Phosphoserine" evidence="2">
    <location>
        <position position="462"/>
    </location>
</feature>
<feature type="modified residue" description="Phosphoserine" evidence="2">
    <location>
        <position position="471"/>
    </location>
</feature>
<feature type="modified residue" description="Phosphoserine" evidence="2">
    <location>
        <position position="480"/>
    </location>
</feature>
<feature type="modified residue" description="Phosphoserine" evidence="15">
    <location>
        <position position="621"/>
    </location>
</feature>
<feature type="modified residue" description="Phosphothreonine" evidence="15">
    <location>
        <position position="622"/>
    </location>
</feature>
<feature type="modified residue" description="Phosphoserine" evidence="15">
    <location>
        <position position="1033"/>
    </location>
</feature>
<feature type="modified residue" description="Phosphoserine" evidence="15">
    <location>
        <position position="1034"/>
    </location>
</feature>
<feature type="modified residue" description="Phosphoserine" evidence="15">
    <location>
        <position position="1041"/>
    </location>
</feature>
<feature type="modified residue" description="Phosphoserine" evidence="15">
    <location>
        <position position="1042"/>
    </location>
</feature>
<feature type="sequence conflict" description="In Ref. 1; AAB33461." evidence="13" ref="1">
    <original>AL</original>
    <variation>SF</variation>
    <location>
        <begin position="495"/>
        <end position="496"/>
    </location>
</feature>
<feature type="sequence conflict" description="In Ref. 1; AAB33461." evidence="13" ref="1">
    <original>L</original>
    <variation>V</variation>
    <location>
        <position position="701"/>
    </location>
</feature>
<feature type="helix" evidence="16">
    <location>
        <begin position="625"/>
        <end position="657"/>
    </location>
</feature>
<feature type="helix" evidence="16">
    <location>
        <begin position="660"/>
        <end position="663"/>
    </location>
</feature>
<feature type="turn" evidence="16">
    <location>
        <begin position="665"/>
        <end position="670"/>
    </location>
</feature>
<feature type="helix" evidence="16">
    <location>
        <begin position="673"/>
        <end position="677"/>
    </location>
</feature>
<feature type="helix" evidence="16">
    <location>
        <begin position="679"/>
        <end position="683"/>
    </location>
</feature>
<feature type="helix" evidence="16">
    <location>
        <begin position="686"/>
        <end position="695"/>
    </location>
</feature>
<feature type="helix" evidence="16">
    <location>
        <begin position="697"/>
        <end position="702"/>
    </location>
</feature>
<feature type="turn" evidence="16">
    <location>
        <begin position="703"/>
        <end position="706"/>
    </location>
</feature>
<feature type="helix" evidence="16">
    <location>
        <begin position="708"/>
        <end position="710"/>
    </location>
</feature>
<feature type="helix" evidence="16">
    <location>
        <begin position="711"/>
        <end position="716"/>
    </location>
</feature>
<feature type="turn" evidence="16">
    <location>
        <begin position="717"/>
        <end position="720"/>
    </location>
</feature>
<feature type="helix" evidence="16">
    <location>
        <begin position="721"/>
        <end position="723"/>
    </location>
</feature>
<feature type="helix" evidence="16">
    <location>
        <begin position="724"/>
        <end position="742"/>
    </location>
</feature>
<feature type="helix" evidence="16">
    <location>
        <begin position="746"/>
        <end position="755"/>
    </location>
</feature>
<feature type="helix" evidence="16">
    <location>
        <begin position="761"/>
        <end position="765"/>
    </location>
</feature>
<feature type="helix" evidence="16">
    <location>
        <begin position="767"/>
        <end position="784"/>
    </location>
</feature>
<feature type="turn" evidence="18">
    <location>
        <begin position="785"/>
        <end position="788"/>
    </location>
</feature>
<feature type="helix" evidence="16">
    <location>
        <begin position="792"/>
        <end position="815"/>
    </location>
</feature>
<feature type="strand" evidence="16">
    <location>
        <begin position="818"/>
        <end position="820"/>
    </location>
</feature>
<feature type="helix" evidence="16">
    <location>
        <begin position="825"/>
        <end position="828"/>
    </location>
</feature>
<feature type="strand" evidence="16">
    <location>
        <begin position="831"/>
        <end position="841"/>
    </location>
</feature>
<feature type="strand" evidence="18">
    <location>
        <begin position="848"/>
        <end position="851"/>
    </location>
</feature>
<feature type="strand" evidence="16">
    <location>
        <begin position="855"/>
        <end position="857"/>
    </location>
</feature>
<feature type="strand" evidence="16">
    <location>
        <begin position="859"/>
        <end position="876"/>
    </location>
</feature>
<feature type="turn" evidence="17">
    <location>
        <begin position="880"/>
        <end position="883"/>
    </location>
</feature>
<feature type="strand" evidence="16">
    <location>
        <begin position="888"/>
        <end position="896"/>
    </location>
</feature>
<feature type="helix" evidence="16">
    <location>
        <begin position="897"/>
        <end position="899"/>
    </location>
</feature>
<feature type="strand" evidence="16">
    <location>
        <begin position="900"/>
        <end position="903"/>
    </location>
</feature>
<feature type="strand" evidence="16">
    <location>
        <begin position="912"/>
        <end position="917"/>
    </location>
</feature>
<feature type="turn" evidence="16">
    <location>
        <begin position="918"/>
        <end position="921"/>
    </location>
</feature>
<feature type="strand" evidence="16">
    <location>
        <begin position="922"/>
        <end position="927"/>
    </location>
</feature>
<feature type="helix" evidence="16">
    <location>
        <begin position="931"/>
        <end position="958"/>
    </location>
</feature>
<feature type="turn" evidence="16">
    <location>
        <begin position="959"/>
        <end position="964"/>
    </location>
</feature>
<gene>
    <name type="primary">Mcf2l</name>
    <name type="synonym">Dbs</name>
</gene>
<evidence type="ECO:0000250" key="1">
    <source>
        <dbReference type="UniProtKB" id="O15068"/>
    </source>
</evidence>
<evidence type="ECO:0000250" key="2">
    <source>
        <dbReference type="UniProtKB" id="Q63406"/>
    </source>
</evidence>
<evidence type="ECO:0000255" key="3"/>
<evidence type="ECO:0000255" key="4">
    <source>
        <dbReference type="PROSITE-ProRule" id="PRU00056"/>
    </source>
</evidence>
<evidence type="ECO:0000255" key="5">
    <source>
        <dbReference type="PROSITE-ProRule" id="PRU00062"/>
    </source>
</evidence>
<evidence type="ECO:0000255" key="6">
    <source>
        <dbReference type="PROSITE-ProRule" id="PRU00145"/>
    </source>
</evidence>
<evidence type="ECO:0000255" key="7">
    <source>
        <dbReference type="PROSITE-ProRule" id="PRU00192"/>
    </source>
</evidence>
<evidence type="ECO:0000256" key="8">
    <source>
        <dbReference type="SAM" id="MobiDB-lite"/>
    </source>
</evidence>
<evidence type="ECO:0000269" key="9">
    <source>
    </source>
</evidence>
<evidence type="ECO:0000269" key="10">
    <source>
    </source>
</evidence>
<evidence type="ECO:0000269" key="11">
    <source>
    </source>
</evidence>
<evidence type="ECO:0000269" key="12">
    <source>
    </source>
</evidence>
<evidence type="ECO:0000305" key="13"/>
<evidence type="ECO:0007744" key="14">
    <source>
        <dbReference type="PDB" id="1LB1"/>
    </source>
</evidence>
<evidence type="ECO:0007744" key="15">
    <source>
    </source>
</evidence>
<evidence type="ECO:0007829" key="16">
    <source>
        <dbReference type="PDB" id="1KZ7"/>
    </source>
</evidence>
<evidence type="ECO:0007829" key="17">
    <source>
        <dbReference type="PDB" id="1KZG"/>
    </source>
</evidence>
<evidence type="ECO:0007829" key="18">
    <source>
        <dbReference type="PDB" id="1RJ2"/>
    </source>
</evidence>
<name>MCF2L_MOUSE</name>
<reference key="1">
    <citation type="journal article" date="1995" name="Oncogene">
        <title>Retroviral transduction and oncogenic selection of a cDNA encoding Dbs, a homolog of the Dbl guanine nucleotide exchange factor.</title>
        <authorList>
            <person name="Whitehead I."/>
            <person name="Kirk H."/>
            <person name="Kay R."/>
        </authorList>
    </citation>
    <scope>NUCLEOTIDE SEQUENCE [MRNA]</scope>
    <scope>TISSUE SPECIFICITY</scope>
    <source>
        <tissue>Hematopoietic</tissue>
    </source>
</reference>
<reference key="2">
    <citation type="journal article" date="2009" name="PLoS Biol.">
        <title>Lineage-specific biology revealed by a finished genome assembly of the mouse.</title>
        <authorList>
            <person name="Church D.M."/>
            <person name="Goodstadt L."/>
            <person name="Hillier L.W."/>
            <person name="Zody M.C."/>
            <person name="Goldstein S."/>
            <person name="She X."/>
            <person name="Bult C.J."/>
            <person name="Agarwala R."/>
            <person name="Cherry J.L."/>
            <person name="DiCuccio M."/>
            <person name="Hlavina W."/>
            <person name="Kapustin Y."/>
            <person name="Meric P."/>
            <person name="Maglott D."/>
            <person name="Birtle Z."/>
            <person name="Marques A.C."/>
            <person name="Graves T."/>
            <person name="Zhou S."/>
            <person name="Teague B."/>
            <person name="Potamousis K."/>
            <person name="Churas C."/>
            <person name="Place M."/>
            <person name="Herschleb J."/>
            <person name="Runnheim R."/>
            <person name="Forrest D."/>
            <person name="Amos-Landgraf J."/>
            <person name="Schwartz D.C."/>
            <person name="Cheng Z."/>
            <person name="Lindblad-Toh K."/>
            <person name="Eichler E.E."/>
            <person name="Ponting C.P."/>
        </authorList>
    </citation>
    <scope>NUCLEOTIDE SEQUENCE [LARGE SCALE GENOMIC DNA]</scope>
    <source>
        <strain>C57BL/6J</strain>
    </source>
</reference>
<reference key="3">
    <citation type="journal article" date="2004" name="Mol. Cell. Proteomics">
        <title>Phosphoproteomic analysis of the developing mouse brain.</title>
        <authorList>
            <person name="Ballif B.A."/>
            <person name="Villen J."/>
            <person name="Beausoleil S.A."/>
            <person name="Schwartz D."/>
            <person name="Gygi S.P."/>
        </authorList>
    </citation>
    <scope>IDENTIFICATION BY MASS SPECTROMETRY [LARGE SCALE ANALYSIS]</scope>
    <source>
        <tissue>Embryonic brain</tissue>
    </source>
</reference>
<reference key="4">
    <citation type="journal article" date="2006" name="Mol. Cell. Biol.">
        <title>Ccpg1, a novel scaffold protein that regulates the activity of the Rho guanine nucleotide exchange factor Dbs.</title>
        <authorList>
            <person name="Kostenko E.V."/>
            <person name="Olabisi O.O."/>
            <person name="Sahay S."/>
            <person name="Rodriguez P.L."/>
            <person name="Whitehead I.P."/>
        </authorList>
    </citation>
    <scope>FUNCTION</scope>
    <scope>INTERACTION WITH CCPG1</scope>
    <scope>SUBCELLULAR LOCATION</scope>
</reference>
<reference key="5">
    <citation type="journal article" date="2010" name="Cell">
        <title>A tissue-specific atlas of mouse protein phosphorylation and expression.</title>
        <authorList>
            <person name="Huttlin E.L."/>
            <person name="Jedrychowski M.P."/>
            <person name="Elias J.E."/>
            <person name="Goswami T."/>
            <person name="Rad R."/>
            <person name="Beausoleil S.A."/>
            <person name="Villen J."/>
            <person name="Haas W."/>
            <person name="Sowa M.E."/>
            <person name="Gygi S.P."/>
        </authorList>
    </citation>
    <scope>PHOSPHORYLATION [LARGE SCALE ANALYSIS] AT SER-621; THR-622; SER-1033; SER-1034; SER-1041 AND SER-1042</scope>
    <scope>IDENTIFICATION BY MASS SPECTROMETRY [LARGE SCALE ANALYSIS]</scope>
    <source>
        <tissue>Brain</tissue>
        <tissue>Brown adipose tissue</tissue>
        <tissue>Heart</tissue>
        <tissue>Kidney</tissue>
        <tissue>Lung</tissue>
    </source>
</reference>
<reference key="6">
    <citation type="journal article" date="2002" name="EMBO J.">
        <title>A crystallographic view of interactions between Dbs and Cdc42: PH domain-assisted guanine nucleotide exchange.</title>
        <authorList>
            <person name="Rossman K.L."/>
            <person name="Worthylake D.K."/>
            <person name="Snyder J.T."/>
            <person name="Siderovski D.P."/>
            <person name="Campbell S.L."/>
            <person name="Sondek J."/>
        </authorList>
    </citation>
    <scope>X-RAY CRYSTALLOGRAPHY (2.4 ANGSTROMS) OF 623-967 IN COMPLEX WITH CDC42</scope>
    <scope>FUNCTION</scope>
</reference>
<reference evidence="14" key="7">
    <citation type="journal article" date="2002" name="Nat. Struct. Biol.">
        <title>Structural basis for the selective activation of Rho GTPases by Dbl exchange factors.</title>
        <authorList>
            <person name="Snyder J.T."/>
            <person name="Worthylake D.K."/>
            <person name="Rossman K.L."/>
            <person name="Betts L."/>
            <person name="Pruitt W.M."/>
            <person name="Siderovski D.P."/>
            <person name="Der C.J."/>
            <person name="Sondek J."/>
        </authorList>
    </citation>
    <scope>X-RAY CRYSTALLOGRAPHY (2.81 ANGSTROMS) OF 623-967 IN COMPLEX WITH RHOA</scope>
    <scope>FUNCTION</scope>
</reference>
<reference key="8">
    <citation type="journal article" date="2004" name="Structure">
        <title>Crystal structure of the DH/PH fragment of Dbs without bound GTPase.</title>
        <authorList>
            <person name="Worthylake D.K."/>
            <person name="Rossman K.L."/>
            <person name="Sondek J."/>
        </authorList>
    </citation>
    <scope>X-RAY CRYSTALLOGRAPHY (3.0 ANGSTROMS) OF 498-843</scope>
</reference>
<keyword id="KW-0002">3D-structure</keyword>
<keyword id="KW-1003">Cell membrane</keyword>
<keyword id="KW-0175">Coiled coil</keyword>
<keyword id="KW-0963">Cytoplasm</keyword>
<keyword id="KW-0344">Guanine-nucleotide releasing factor</keyword>
<keyword id="KW-0446">Lipid-binding</keyword>
<keyword id="KW-0472">Membrane</keyword>
<keyword id="KW-0597">Phosphoprotein</keyword>
<keyword id="KW-0656">Proto-oncogene</keyword>
<keyword id="KW-1185">Reference proteome</keyword>
<keyword id="KW-0728">SH3 domain</keyword>
<accession>Q64096</accession>
<accession>E9PV70</accession>
<sequence length="1149" mass="129113">MSDCWCFIFCKEHVRSNPLSPQHDGASREEADHQVDVSDGIRLVPDKAEATAATASDEIMHQDIVPLCAADIQEQLKKRFAYLSGGRGQDGSPVITFPDYPAFSEIPDKEFQNVMTYLTSIPSLQDAGIGFILVIDRRQDKWTSVKASVLRIAASFPANLQLVLVLRPTGFFQRTLSDIAFKFNRDEFKMKVPVMMLSSVPELHGYIDKSQLTEDLGGTLDYCHSRWLCHRTAIESFALMVKQTAQMLQAFGTELAETELPNDVQSTSLVLSAHTEKKAKVKEDLQLALKEGNSILESLREPLAESAAHSVNQDQLDNQATVQRLLAQLNETEAAFDEFWAKHQQKLEQCLQLRHFEQGFREVKTTLDSMSQKIAAFTDVGNSLAHVQHLLKDLTAFEEKSSVAVDKARALSLEGQQLIENRHYAVDSIHPKCEELQHLCDHFASEVTRRRGLLSKSLELHSLLETSMKWSDEGIFLLASQPVDKCQSQDGAEAALQEIEKFLETGAENKIQELNEIYKEYECILNQDLLEHVQKVFQKQESTEEMFHRRQASLKKLAAKQTRPVQPVAPRPEALTKSPSPSPGSWRSSENSSSEGNALRRGPYRRAKSEMSEPRQGRTSSTGEEEESLAILRRHVMNELLDTERAYVEELLCVLEGYAAEMDNPLMAHLISTGLQNKKNILFGNMEEIYHFHNRNIPAGLESCIDCPELVGRCFLERMEEFQIYEKYCQNKPRSESLWRQCSDCPFFQECQKKLDHKLSLDSYLLKPVQRITKYQLLLKEMLKYSKHCEGAEDLQEALSSILGILKAVNDSMHLIAITGYDGNLGDLGKLLMQGSFSVWTDHKKGHTKVKELARFKPMQRHLFLHEKAVLFCKKREENGEGYEKAPSYSYKQSLNMTAVGITENVKGDTKKFEIWYNAREEVYIIQAPTPEIKAAWVNEIRKVLTSQLQACREASQHRALEQSHSLPLPTPSSTSPTKGNTRNVKKLEDRKTDPLSLEGYVSSSLPKPPEKGKGWSKTSHSLEAPEEDGGWSSAEELINSSDAEEDGGVGPKKLVPGKYTVVMDDEKGGPDTLAMRSGDMVEVVEEGAEGLWYVRDLTSSKEGWVPASSLSTLLGKSSSAQCLSSSGKIHCARQLCPEPAEILSPEPV</sequence>
<protein>
    <recommendedName>
        <fullName>Guanine nucleotide exchange factor DBS</fullName>
    </recommendedName>
    <alternativeName>
        <fullName>DBL's big sister</fullName>
    </alternativeName>
    <alternativeName>
        <fullName>MCF2-transforming sequence-like protein</fullName>
    </alternativeName>
</protein>